<organism>
    <name type="scientific">Actinobacillus pleuropneumoniae serotype 5b (strain L20)</name>
    <dbReference type="NCBI Taxonomy" id="416269"/>
    <lineage>
        <taxon>Bacteria</taxon>
        <taxon>Pseudomonadati</taxon>
        <taxon>Pseudomonadota</taxon>
        <taxon>Gammaproteobacteria</taxon>
        <taxon>Pasteurellales</taxon>
        <taxon>Pasteurellaceae</taxon>
        <taxon>Actinobacillus</taxon>
    </lineage>
</organism>
<dbReference type="EC" id="1.7.1.13" evidence="1"/>
<dbReference type="EMBL" id="CP000569">
    <property type="protein sequence ID" value="ABN73940.1"/>
    <property type="molecule type" value="Genomic_DNA"/>
</dbReference>
<dbReference type="RefSeq" id="WP_009875411.1">
    <property type="nucleotide sequence ID" value="NC_009053.1"/>
</dbReference>
<dbReference type="SMR" id="A3N0K4"/>
<dbReference type="STRING" id="416269.APL_0844"/>
<dbReference type="EnsemblBacteria" id="ABN73940">
    <property type="protein sequence ID" value="ABN73940"/>
    <property type="gene ID" value="APL_0844"/>
</dbReference>
<dbReference type="KEGG" id="apl:APL_0844"/>
<dbReference type="PATRIC" id="fig|416269.6.peg.883"/>
<dbReference type="eggNOG" id="COG0780">
    <property type="taxonomic scope" value="Bacteria"/>
</dbReference>
<dbReference type="eggNOG" id="COG2904">
    <property type="taxonomic scope" value="Bacteria"/>
</dbReference>
<dbReference type="HOGENOM" id="CLU_054738_0_0_6"/>
<dbReference type="UniPathway" id="UPA00392"/>
<dbReference type="Proteomes" id="UP000001432">
    <property type="component" value="Chromosome"/>
</dbReference>
<dbReference type="GO" id="GO:0005737">
    <property type="term" value="C:cytoplasm"/>
    <property type="evidence" value="ECO:0007669"/>
    <property type="project" value="UniProtKB-SubCell"/>
</dbReference>
<dbReference type="GO" id="GO:0033739">
    <property type="term" value="F:preQ1 synthase activity"/>
    <property type="evidence" value="ECO:0007669"/>
    <property type="project" value="UniProtKB-UniRule"/>
</dbReference>
<dbReference type="GO" id="GO:0008616">
    <property type="term" value="P:queuosine biosynthetic process"/>
    <property type="evidence" value="ECO:0007669"/>
    <property type="project" value="UniProtKB-UniRule"/>
</dbReference>
<dbReference type="GO" id="GO:0006400">
    <property type="term" value="P:tRNA modification"/>
    <property type="evidence" value="ECO:0007669"/>
    <property type="project" value="UniProtKB-UniRule"/>
</dbReference>
<dbReference type="Gene3D" id="3.30.1130.10">
    <property type="match status" value="2"/>
</dbReference>
<dbReference type="HAMAP" id="MF_00817">
    <property type="entry name" value="QueF_type2"/>
    <property type="match status" value="1"/>
</dbReference>
<dbReference type="InterPro" id="IPR043133">
    <property type="entry name" value="GTP-CH-I_C/QueF"/>
</dbReference>
<dbReference type="InterPro" id="IPR050084">
    <property type="entry name" value="NADPH_dep_7-cyano-7-deazaG_red"/>
</dbReference>
<dbReference type="InterPro" id="IPR029500">
    <property type="entry name" value="QueF"/>
</dbReference>
<dbReference type="InterPro" id="IPR029139">
    <property type="entry name" value="QueF_N"/>
</dbReference>
<dbReference type="InterPro" id="IPR016428">
    <property type="entry name" value="QueF_type2"/>
</dbReference>
<dbReference type="NCBIfam" id="TIGR03138">
    <property type="entry name" value="QueF"/>
    <property type="match status" value="1"/>
</dbReference>
<dbReference type="PANTHER" id="PTHR34354">
    <property type="entry name" value="NADPH-DEPENDENT 7-CYANO-7-DEAZAGUANINE REDUCTASE"/>
    <property type="match status" value="1"/>
</dbReference>
<dbReference type="PANTHER" id="PTHR34354:SF1">
    <property type="entry name" value="NADPH-DEPENDENT 7-CYANO-7-DEAZAGUANINE REDUCTASE"/>
    <property type="match status" value="1"/>
</dbReference>
<dbReference type="Pfam" id="PF14489">
    <property type="entry name" value="QueF"/>
    <property type="match status" value="1"/>
</dbReference>
<dbReference type="Pfam" id="PF14819">
    <property type="entry name" value="QueF_N"/>
    <property type="match status" value="1"/>
</dbReference>
<dbReference type="PIRSF" id="PIRSF004750">
    <property type="entry name" value="Nitrile_oxidored_YqcD_prd"/>
    <property type="match status" value="1"/>
</dbReference>
<dbReference type="SUPFAM" id="SSF55620">
    <property type="entry name" value="Tetrahydrobiopterin biosynthesis enzymes-like"/>
    <property type="match status" value="1"/>
</dbReference>
<name>QUEF_ACTP2</name>
<evidence type="ECO:0000255" key="1">
    <source>
        <dbReference type="HAMAP-Rule" id="MF_00817"/>
    </source>
</evidence>
<proteinExistence type="inferred from homology"/>
<accession>A3N0K4</accession>
<reference key="1">
    <citation type="journal article" date="2008" name="J. Bacteriol.">
        <title>The complete genome sequence of Actinobacillus pleuropneumoniae L20 (serotype 5b).</title>
        <authorList>
            <person name="Foote S.J."/>
            <person name="Bosse J.T."/>
            <person name="Bouevitch A.B."/>
            <person name="Langford P.R."/>
            <person name="Young N.M."/>
            <person name="Nash J.H.E."/>
        </authorList>
    </citation>
    <scope>NUCLEOTIDE SEQUENCE [LARGE SCALE GENOMIC DNA]</scope>
    <source>
        <strain>L20</strain>
    </source>
</reference>
<comment type="function">
    <text evidence="1">Catalyzes the NADPH-dependent reduction of 7-cyano-7-deazaguanine (preQ0) to 7-aminomethyl-7-deazaguanine (preQ1).</text>
</comment>
<comment type="catalytic activity">
    <reaction evidence="1">
        <text>7-aminomethyl-7-carbaguanine + 2 NADP(+) = 7-cyano-7-deazaguanine + 2 NADPH + 3 H(+)</text>
        <dbReference type="Rhea" id="RHEA:13409"/>
        <dbReference type="ChEBI" id="CHEBI:15378"/>
        <dbReference type="ChEBI" id="CHEBI:45075"/>
        <dbReference type="ChEBI" id="CHEBI:57783"/>
        <dbReference type="ChEBI" id="CHEBI:58349"/>
        <dbReference type="ChEBI" id="CHEBI:58703"/>
        <dbReference type="EC" id="1.7.1.13"/>
    </reaction>
</comment>
<comment type="pathway">
    <text evidence="1">tRNA modification; tRNA-queuosine biosynthesis.</text>
</comment>
<comment type="subunit">
    <text evidence="1">Homodimer.</text>
</comment>
<comment type="subcellular location">
    <subcellularLocation>
        <location evidence="1">Cytoplasm</location>
    </subcellularLocation>
</comment>
<comment type="similarity">
    <text evidence="1">Belongs to the GTP cyclohydrolase I family. QueF type 2 subfamily.</text>
</comment>
<sequence length="279" mass="32106">MNYNDKSLSALKLGQKTEYKSEYDPTLLQPVPRKLNRDGLGITEQQPFDRGADVWTCYELSWLNENGLPQVAIADVAIDFRSENLIESKSFKLYLNSFNQTKFASLEQVEQTLAKDLSQCASGQVSVKVYKLSAYTQQPIVDFAGECIDEQDIQIDSYEFSNEHLASVAEGEVVEETLVSHLLKSNCLITSQPDWGSVQIHYVGKKLNREKLLRYLVSFREHNEFHEQCVERIFIDLIQFTQPEKLTVYARYTRRGGLDINPFRSNFESVPQNLRMARQ</sequence>
<gene>
    <name evidence="1" type="primary">queF</name>
    <name type="ordered locus">APL_0844</name>
</gene>
<feature type="chain" id="PRO_1000062326" description="NADPH-dependent 7-cyano-7-deazaguanine reductase">
    <location>
        <begin position="1"/>
        <end position="279"/>
    </location>
</feature>
<feature type="active site" description="Thioimide intermediate" evidence="1">
    <location>
        <position position="187"/>
    </location>
</feature>
<feature type="active site" description="Proton donor" evidence="1">
    <location>
        <position position="194"/>
    </location>
</feature>
<feature type="binding site" evidence="1">
    <location>
        <begin position="86"/>
        <end position="88"/>
    </location>
    <ligand>
        <name>substrate</name>
    </ligand>
</feature>
<feature type="binding site" evidence="1">
    <location>
        <begin position="88"/>
        <end position="89"/>
    </location>
    <ligand>
        <name>NADPH</name>
        <dbReference type="ChEBI" id="CHEBI:57783"/>
    </ligand>
</feature>
<feature type="binding site" evidence="1">
    <location>
        <begin position="226"/>
        <end position="227"/>
    </location>
    <ligand>
        <name>substrate</name>
    </ligand>
</feature>
<feature type="binding site" evidence="1">
    <location>
        <begin position="255"/>
        <end position="256"/>
    </location>
    <ligand>
        <name>NADPH</name>
        <dbReference type="ChEBI" id="CHEBI:57783"/>
    </ligand>
</feature>
<protein>
    <recommendedName>
        <fullName evidence="1">NADPH-dependent 7-cyano-7-deazaguanine reductase</fullName>
        <ecNumber evidence="1">1.7.1.13</ecNumber>
    </recommendedName>
    <alternativeName>
        <fullName evidence="1">7-cyano-7-carbaguanine reductase</fullName>
    </alternativeName>
    <alternativeName>
        <fullName evidence="1">NADPH-dependent nitrile oxidoreductase</fullName>
    </alternativeName>
    <alternativeName>
        <fullName evidence="1">PreQ(0) reductase</fullName>
    </alternativeName>
</protein>
<keyword id="KW-0963">Cytoplasm</keyword>
<keyword id="KW-0521">NADP</keyword>
<keyword id="KW-0560">Oxidoreductase</keyword>
<keyword id="KW-0671">Queuosine biosynthesis</keyword>
<keyword id="KW-1185">Reference proteome</keyword>